<evidence type="ECO:0000250" key="1"/>
<evidence type="ECO:0000250" key="2">
    <source>
        <dbReference type="UniProtKB" id="Q8K4F5"/>
    </source>
</evidence>
<evidence type="ECO:0000250" key="3">
    <source>
        <dbReference type="UniProtKB" id="Q8NFV4"/>
    </source>
</evidence>
<evidence type="ECO:0000255" key="4"/>
<evidence type="ECO:0000269" key="5">
    <source>
    </source>
</evidence>
<evidence type="ECO:0000305" key="6"/>
<evidence type="ECO:0000305" key="7">
    <source>
    </source>
</evidence>
<reference key="1">
    <citation type="submission" date="2005-08" db="EMBL/GenBank/DDBJ databases">
        <authorList>
            <consortium name="NIH - Mammalian Gene Collection (MGC) project"/>
        </authorList>
    </citation>
    <scope>NUCLEOTIDE SEQUENCE [LARGE SCALE MRNA]</scope>
    <source>
        <strain>Crossbred X Angus</strain>
        <tissue>Ileum</tissue>
    </source>
</reference>
<reference key="2">
    <citation type="journal article" date="2007" name="Lipids">
        <title>Bovine brain diacylglycerol lipase: substrate specificity and activation by cyclic AMP-dependent protein kinase.</title>
        <authorList>
            <person name="Rosenberger T.A."/>
            <person name="Farooqui A.A."/>
            <person name="Horrocks L.A."/>
        </authorList>
    </citation>
    <scope>FUNCTION</scope>
    <scope>CATALYTIC ACTIVITY</scope>
    <scope>BIOPHYSICOCHEMICAL PROPERTIES</scope>
    <scope>ACTIVITY REGULATION</scope>
    <scope>PHOSPHORYLATION</scope>
</reference>
<keyword id="KW-0378">Hydrolase</keyword>
<keyword id="KW-0496">Mitochondrion</keyword>
<keyword id="KW-1185">Reference proteome</keyword>
<keyword id="KW-0809">Transit peptide</keyword>
<accession>Q3SZ73</accession>
<proteinExistence type="evidence at protein level"/>
<feature type="transit peptide" description="Mitochondrion" evidence="4">
    <location>
        <begin position="1"/>
        <end position="22"/>
    </location>
</feature>
<feature type="chain" id="PRO_0000281002" description="sn-1-specific diacylglycerol lipase ABHD11">
    <location>
        <begin position="23"/>
        <end position="303"/>
    </location>
</feature>
<feature type="domain" description="AB hydrolase-1" evidence="4">
    <location>
        <begin position="55"/>
        <end position="290"/>
    </location>
</feature>
<feature type="active site" description="Charge relay system" evidence="1">
    <location>
        <position position="129"/>
    </location>
</feature>
<feature type="active site" description="Charge relay system" evidence="1">
    <location>
        <position position="225"/>
    </location>
</feature>
<feature type="active site" description="Charge relay system" evidence="1">
    <location>
        <position position="284"/>
    </location>
</feature>
<feature type="modified residue" description="N6-succinyllysine" evidence="2">
    <location>
        <position position="75"/>
    </location>
</feature>
<gene>
    <name evidence="3" type="primary">ABHD11</name>
</gene>
<comment type="function">
    <text evidence="2 3 5">Catalyzes the hydrolysis of diacylglycerol in vitro and may function as a key regulator in lipid metabolism, namely by regulating the intracellular levels of diacylglycerol (PubMed:17393225). 1,2-diacyl-sn-glycerols are the preferred substrate over 1,3-diacyl-sn-glycerols (PubMed:17393225). The enzyme hydrolyzes stearate in preference to palmitate from the sn-1 position of 1,2-diacyl-sn-glycerols (PubMed:17393225). Maintains the functional lipoylation of the 2-oxoglutarate dehydrogenase complex (OGDHc) through its interaction with the OGDHc by preventing the formation of lipoyl adducts (By similarity). In addition, is also required for the expansion and differentiation of embryonic stem cells (ESCs) (By similarity).</text>
</comment>
<comment type="catalytic activity">
    <reaction evidence="7">
        <text>a 1,3-diacyl-sn-glycerol + H2O = a 1-acyl-sn-glycerol + a fatty acid + H(+)</text>
        <dbReference type="Rhea" id="RHEA:38503"/>
        <dbReference type="ChEBI" id="CHEBI:15377"/>
        <dbReference type="ChEBI" id="CHEBI:15378"/>
        <dbReference type="ChEBI" id="CHEBI:28868"/>
        <dbReference type="ChEBI" id="CHEBI:64683"/>
        <dbReference type="ChEBI" id="CHEBI:77272"/>
    </reaction>
</comment>
<comment type="catalytic activity">
    <reaction evidence="7">
        <text>1-octadecanoyl-2-(9Z-octadecenoyl)-sn-glycerol + H2O = 2-(9Z-octadecenoyl)-glycerol + octadecanoate + H(+)</text>
        <dbReference type="Rhea" id="RHEA:77103"/>
        <dbReference type="ChEBI" id="CHEBI:15377"/>
        <dbReference type="ChEBI" id="CHEBI:15378"/>
        <dbReference type="ChEBI" id="CHEBI:25629"/>
        <dbReference type="ChEBI" id="CHEBI:73990"/>
        <dbReference type="ChEBI" id="CHEBI:75468"/>
    </reaction>
</comment>
<comment type="catalytic activity">
    <reaction evidence="7">
        <text>1-octadecanoyl-2-(4Z,7Z,10Z,13Z,16Z,19Z-docosahexaenoyl)-sn-glycerol + H2O = 2-(4Z,7Z,10Z,13Z,16Z,19Z-docosahexaenoyl)-glycerol + octadecanoate + H(+)</text>
        <dbReference type="Rhea" id="RHEA:77107"/>
        <dbReference type="ChEBI" id="CHEBI:15377"/>
        <dbReference type="ChEBI" id="CHEBI:15378"/>
        <dbReference type="ChEBI" id="CHEBI:25629"/>
        <dbReference type="ChEBI" id="CHEBI:77129"/>
        <dbReference type="ChEBI" id="CHEBI:186738"/>
    </reaction>
</comment>
<comment type="catalytic activity">
    <reaction evidence="7">
        <text>a 1,2-diacyl-sn-glycerol + H2O = a 2-acylglycerol + a fatty acid + H(+)</text>
        <dbReference type="Rhea" id="RHEA:33275"/>
        <dbReference type="ChEBI" id="CHEBI:15377"/>
        <dbReference type="ChEBI" id="CHEBI:15378"/>
        <dbReference type="ChEBI" id="CHEBI:17389"/>
        <dbReference type="ChEBI" id="CHEBI:17815"/>
        <dbReference type="ChEBI" id="CHEBI:28868"/>
        <dbReference type="EC" id="3.1.1.116"/>
    </reaction>
</comment>
<comment type="catalytic activity">
    <reaction evidence="7">
        <text>1,2-didecanoylglycerol + H2O = decanoylglycerol + decanoate + H(+)</text>
        <dbReference type="Rhea" id="RHEA:48596"/>
        <dbReference type="ChEBI" id="CHEBI:11152"/>
        <dbReference type="ChEBI" id="CHEBI:15377"/>
        <dbReference type="ChEBI" id="CHEBI:15378"/>
        <dbReference type="ChEBI" id="CHEBI:27689"/>
        <dbReference type="ChEBI" id="CHEBI:90605"/>
    </reaction>
</comment>
<comment type="catalytic activity">
    <reaction evidence="3">
        <text>1-octadecanoyl-2-(5Z,8Z,11Z,14Z-eicosatetraenoyl)-sn-glycerol + H2O = 2-(5Z,8Z,11Z,14Z-eicosatetraenoyl)-glycerol + octadecanoate + H(+)</text>
        <dbReference type="Rhea" id="RHEA:38507"/>
        <dbReference type="ChEBI" id="CHEBI:15377"/>
        <dbReference type="ChEBI" id="CHEBI:15378"/>
        <dbReference type="ChEBI" id="CHEBI:25629"/>
        <dbReference type="ChEBI" id="CHEBI:52392"/>
        <dbReference type="ChEBI" id="CHEBI:75728"/>
    </reaction>
</comment>
<comment type="activity regulation">
    <text evidence="5">The diacylglycerol lipase activity can be modulated by phosphorylation by cAMP-dependent protein kinase.</text>
</comment>
<comment type="biophysicochemical properties">
    <kinetics>
        <KM evidence="5">38 uM for 1,2-Didecanoyl-1-thioglycerol</KM>
        <KM evidence="5">63 uM for 1-octadecanoyl-2-(5Z,8Z,11Z,14Z-eicosatetraenoyl)-sn-glycerol</KM>
        <KM evidence="5">55 uM for 11-octadecanoyl-2-(5Z,8Z,11Z,14Z-eicosatetraenoyl)-sn-glycerol (when phosphorylated by a cAMP-dependent protein kinase)</KM>
        <Vmax evidence="5">120.0 nmol/min/mg enzyme toward 1,2-didecanoylglycerol</Vmax>
        <Vmax evidence="5">616.0 nmol/min/mg enzyme toward 1-octadecanoyl-2-(5Z,8Z,11Z,14Z-eicosatetraenoyl)-sn-glycerol</Vmax>
        <Vmax evidence="5">1900.0 nmol/min/mg enzyme toward 1-octadecanoyl-2-(5Z,8Z,11Z,14Z-eicosatetraenoyl)-sn-glycerol (when phosphorylated by a cAMP-dependent protein kinase)</Vmax>
    </kinetics>
</comment>
<comment type="subunit">
    <text evidence="3">Interacts with OGDH and DLST; this interaction maintains the functional lipoylation of the 2-oxoglutarate dehydrogenase complex.</text>
</comment>
<comment type="subcellular location">
    <subcellularLocation>
        <location evidence="3">Mitochondrion</location>
    </subcellularLocation>
    <subcellularLocation>
        <location evidence="3">Mitochondrion matrix</location>
    </subcellularLocation>
</comment>
<comment type="PTM">
    <text evidence="7">Phosphorylated.</text>
</comment>
<comment type="similarity">
    <text evidence="6">Belongs to the AB hydrolase superfamily.</text>
</comment>
<name>ABHDB_BOVIN</name>
<sequence length="303" mass="33548">MLRWTRAWTAPYRGIGLSNSSFSRLPIAPSSSQGGTEPRPVRLSYKLLDGEAASPALVFLHGLFGSKTNFNFVAKTLAQQTGRRVLTVDARNHGESSHSPDMSYEAMSKDLQDLLPHLGLVPCVLIGHSMGGRTAMLLALQRPELVERLIAVDISQVETTSSSNFPNYIAAMRAVDMANEASLSGARKLADERLRSVIQSASIRQLLLTNLVEVDGRFVWRLNLDALAQHLDKILDFPARQETYSGPTLFLRGGNSQFLLPSHYPEIRRLFPRAQMQTVPNAGHWVHSDRPQDFMAAVQSFLA</sequence>
<organism>
    <name type="scientific">Bos taurus</name>
    <name type="common">Bovine</name>
    <dbReference type="NCBI Taxonomy" id="9913"/>
    <lineage>
        <taxon>Eukaryota</taxon>
        <taxon>Metazoa</taxon>
        <taxon>Chordata</taxon>
        <taxon>Craniata</taxon>
        <taxon>Vertebrata</taxon>
        <taxon>Euteleostomi</taxon>
        <taxon>Mammalia</taxon>
        <taxon>Eutheria</taxon>
        <taxon>Laurasiatheria</taxon>
        <taxon>Artiodactyla</taxon>
        <taxon>Ruminantia</taxon>
        <taxon>Pecora</taxon>
        <taxon>Bovidae</taxon>
        <taxon>Bovinae</taxon>
        <taxon>Bos</taxon>
    </lineage>
</organism>
<protein>
    <recommendedName>
        <fullName evidence="6">sn-1-specific diacylglycerol lipase ABHD11</fullName>
        <ecNumber evidence="7">3.1.1.116</ecNumber>
    </recommendedName>
    <alternativeName>
        <fullName evidence="6">Alpha/beta hydrolase domain-containing protein 11</fullName>
        <shortName evidence="3">Abhydrolase domain-containing protein 11</shortName>
    </alternativeName>
</protein>
<dbReference type="EC" id="3.1.1.116" evidence="7"/>
<dbReference type="EMBL" id="BC103078">
    <property type="protein sequence ID" value="AAI03079.1"/>
    <property type="molecule type" value="mRNA"/>
</dbReference>
<dbReference type="RefSeq" id="NP_001029544.1">
    <property type="nucleotide sequence ID" value="NM_001034372.1"/>
</dbReference>
<dbReference type="SMR" id="Q3SZ73"/>
<dbReference type="FunCoup" id="Q3SZ73">
    <property type="interactions" value="2245"/>
</dbReference>
<dbReference type="STRING" id="9913.ENSBTAP00000062070"/>
<dbReference type="ESTHER" id="bovin-q3sz73">
    <property type="family name" value="ABHD11-Acetyl_transferase"/>
</dbReference>
<dbReference type="PaxDb" id="9913-ENSBTAP00000013668"/>
<dbReference type="Ensembl" id="ENSBTAT00000013668.7">
    <property type="protein sequence ID" value="ENSBTAP00000013668.5"/>
    <property type="gene ID" value="ENSBTAG00000010339.7"/>
</dbReference>
<dbReference type="GeneID" id="510109"/>
<dbReference type="KEGG" id="bta:510109"/>
<dbReference type="CTD" id="83451"/>
<dbReference type="VEuPathDB" id="HostDB:ENSBTAG00000010339"/>
<dbReference type="VGNC" id="VGNC:25489">
    <property type="gene designation" value="ABHD11"/>
</dbReference>
<dbReference type="eggNOG" id="KOG2382">
    <property type="taxonomic scope" value="Eukaryota"/>
</dbReference>
<dbReference type="eggNOG" id="KOG4178">
    <property type="taxonomic scope" value="Eukaryota"/>
</dbReference>
<dbReference type="GeneTree" id="ENSGT00390000015880"/>
<dbReference type="HOGENOM" id="CLU_020336_53_0_1"/>
<dbReference type="InParanoid" id="Q3SZ73"/>
<dbReference type="OrthoDB" id="8119704at2759"/>
<dbReference type="TreeFam" id="TF314071"/>
<dbReference type="Proteomes" id="UP000009136">
    <property type="component" value="Chromosome 25"/>
</dbReference>
<dbReference type="Bgee" id="ENSBTAG00000010339">
    <property type="expression patterns" value="Expressed in digestive system secreted substance and 105 other cell types or tissues"/>
</dbReference>
<dbReference type="GO" id="GO:0005759">
    <property type="term" value="C:mitochondrial matrix"/>
    <property type="evidence" value="ECO:0000250"/>
    <property type="project" value="UniProtKB"/>
</dbReference>
<dbReference type="GO" id="GO:0005739">
    <property type="term" value="C:mitochondrion"/>
    <property type="evidence" value="ECO:0000250"/>
    <property type="project" value="UniProtKB"/>
</dbReference>
<dbReference type="GO" id="GO:0045252">
    <property type="term" value="C:oxoglutarate dehydrogenase complex"/>
    <property type="evidence" value="ECO:0000250"/>
    <property type="project" value="UniProtKB"/>
</dbReference>
<dbReference type="GO" id="GO:0052689">
    <property type="term" value="F:carboxylic ester hydrolase activity"/>
    <property type="evidence" value="ECO:0000318"/>
    <property type="project" value="GO_Central"/>
</dbReference>
<dbReference type="GO" id="GO:0016298">
    <property type="term" value="F:lipase activity"/>
    <property type="evidence" value="ECO:0000314"/>
    <property type="project" value="UniProtKB"/>
</dbReference>
<dbReference type="GO" id="GO:0006629">
    <property type="term" value="P:lipid metabolic process"/>
    <property type="evidence" value="ECO:0000318"/>
    <property type="project" value="GO_Central"/>
</dbReference>
<dbReference type="FunFam" id="3.40.50.1820:FF:000039">
    <property type="entry name" value="Esterase ybfF"/>
    <property type="match status" value="1"/>
</dbReference>
<dbReference type="Gene3D" id="3.40.50.1820">
    <property type="entry name" value="alpha/beta hydrolase"/>
    <property type="match status" value="1"/>
</dbReference>
<dbReference type="InterPro" id="IPR000073">
    <property type="entry name" value="AB_hydrolase_1"/>
</dbReference>
<dbReference type="InterPro" id="IPR029058">
    <property type="entry name" value="AB_hydrolase_fold"/>
</dbReference>
<dbReference type="InterPro" id="IPR000639">
    <property type="entry name" value="Epox_hydrolase-like"/>
</dbReference>
<dbReference type="PANTHER" id="PTHR46118">
    <property type="entry name" value="PROTEIN ABHD11"/>
    <property type="match status" value="1"/>
</dbReference>
<dbReference type="PANTHER" id="PTHR46118:SF4">
    <property type="entry name" value="PROTEIN ABHD11"/>
    <property type="match status" value="1"/>
</dbReference>
<dbReference type="Pfam" id="PF00561">
    <property type="entry name" value="Abhydrolase_1"/>
    <property type="match status" value="1"/>
</dbReference>
<dbReference type="PRINTS" id="PR00111">
    <property type="entry name" value="ABHYDROLASE"/>
</dbReference>
<dbReference type="PRINTS" id="PR00412">
    <property type="entry name" value="EPOXHYDRLASE"/>
</dbReference>
<dbReference type="SUPFAM" id="SSF53474">
    <property type="entry name" value="alpha/beta-Hydrolases"/>
    <property type="match status" value="1"/>
</dbReference>